<feature type="chain" id="PRO_0000063077" description="Putative pterin-4-alpha-carbinolamine dehydratase">
    <location>
        <begin position="1"/>
        <end position="97"/>
    </location>
</feature>
<name>PHS_BRUSU</name>
<accession>P65723</accession>
<accession>G0KAX9</accession>
<accession>Q8YEL4</accession>
<protein>
    <recommendedName>
        <fullName evidence="1">Putative pterin-4-alpha-carbinolamine dehydratase</fullName>
        <shortName evidence="1">PHS</shortName>
        <ecNumber evidence="1">4.2.1.96</ecNumber>
    </recommendedName>
    <alternativeName>
        <fullName evidence="1">4-alpha-hydroxy-tetrahydropterin dehydratase</fullName>
    </alternativeName>
    <alternativeName>
        <fullName evidence="1">Pterin carbinolamine dehydratase</fullName>
        <shortName evidence="1">PCD</shortName>
    </alternativeName>
</protein>
<keyword id="KW-0456">Lyase</keyword>
<sequence>MARNRLTESEMNEALRALDGWQKVDGREAITRSFKFKDFSTAFGFMAQAALYAEKLDHHPEWFNAYNRVDVTLATHSENGVTELDIKMARKMNAIAG</sequence>
<organism>
    <name type="scientific">Brucella suis biovar 1 (strain 1330)</name>
    <dbReference type="NCBI Taxonomy" id="204722"/>
    <lineage>
        <taxon>Bacteria</taxon>
        <taxon>Pseudomonadati</taxon>
        <taxon>Pseudomonadota</taxon>
        <taxon>Alphaproteobacteria</taxon>
        <taxon>Hyphomicrobiales</taxon>
        <taxon>Brucellaceae</taxon>
        <taxon>Brucella/Ochrobactrum group</taxon>
        <taxon>Brucella</taxon>
    </lineage>
</organism>
<gene>
    <name type="primary">phhB</name>
    <name type="ordered locus">BR0082</name>
    <name type="ordered locus">BS1330_I0082</name>
</gene>
<proteinExistence type="inferred from homology"/>
<comment type="catalytic activity">
    <reaction evidence="1">
        <text>(4aS,6R)-4a-hydroxy-L-erythro-5,6,7,8-tetrahydrobiopterin = (6R)-L-erythro-6,7-dihydrobiopterin + H2O</text>
        <dbReference type="Rhea" id="RHEA:11920"/>
        <dbReference type="ChEBI" id="CHEBI:15377"/>
        <dbReference type="ChEBI" id="CHEBI:15642"/>
        <dbReference type="ChEBI" id="CHEBI:43120"/>
        <dbReference type="EC" id="4.2.1.96"/>
    </reaction>
</comment>
<comment type="similarity">
    <text evidence="1">Belongs to the pterin-4-alpha-carbinolamine dehydratase family.</text>
</comment>
<evidence type="ECO:0000255" key="1">
    <source>
        <dbReference type="HAMAP-Rule" id="MF_00434"/>
    </source>
</evidence>
<reference key="1">
    <citation type="journal article" date="2002" name="Proc. Natl. Acad. Sci. U.S.A.">
        <title>The Brucella suis genome reveals fundamental similarities between animal and plant pathogens and symbionts.</title>
        <authorList>
            <person name="Paulsen I.T."/>
            <person name="Seshadri R."/>
            <person name="Nelson K.E."/>
            <person name="Eisen J.A."/>
            <person name="Heidelberg J.F."/>
            <person name="Read T.D."/>
            <person name="Dodson R.J."/>
            <person name="Umayam L.A."/>
            <person name="Brinkac L.M."/>
            <person name="Beanan M.J."/>
            <person name="Daugherty S.C."/>
            <person name="DeBoy R.T."/>
            <person name="Durkin A.S."/>
            <person name="Kolonay J.F."/>
            <person name="Madupu R."/>
            <person name="Nelson W.C."/>
            <person name="Ayodeji B."/>
            <person name="Kraul M."/>
            <person name="Shetty J."/>
            <person name="Malek J.A."/>
            <person name="Van Aken S.E."/>
            <person name="Riedmuller S."/>
            <person name="Tettelin H."/>
            <person name="Gill S.R."/>
            <person name="White O."/>
            <person name="Salzberg S.L."/>
            <person name="Hoover D.L."/>
            <person name="Lindler L.E."/>
            <person name="Halling S.M."/>
            <person name="Boyle S.M."/>
            <person name="Fraser C.M."/>
        </authorList>
    </citation>
    <scope>NUCLEOTIDE SEQUENCE [LARGE SCALE GENOMIC DNA]</scope>
    <source>
        <strain>1330</strain>
    </source>
</reference>
<reference key="2">
    <citation type="journal article" date="2011" name="J. Bacteriol.">
        <title>Revised genome sequence of Brucella suis 1330.</title>
        <authorList>
            <person name="Tae H."/>
            <person name="Shallom S."/>
            <person name="Settlage R."/>
            <person name="Preston D."/>
            <person name="Adams L.G."/>
            <person name="Garner H.R."/>
        </authorList>
    </citation>
    <scope>NUCLEOTIDE SEQUENCE [LARGE SCALE GENOMIC DNA]</scope>
    <source>
        <strain>1330</strain>
    </source>
</reference>
<dbReference type="EC" id="4.2.1.96" evidence="1"/>
<dbReference type="EMBL" id="AE014291">
    <property type="protein sequence ID" value="AAN29038.1"/>
    <property type="molecule type" value="Genomic_DNA"/>
</dbReference>
<dbReference type="EMBL" id="CP002997">
    <property type="protein sequence ID" value="AEM17450.1"/>
    <property type="molecule type" value="Genomic_DNA"/>
</dbReference>
<dbReference type="RefSeq" id="WP_002965330.1">
    <property type="nucleotide sequence ID" value="NZ_KN046804.1"/>
</dbReference>
<dbReference type="SMR" id="P65723"/>
<dbReference type="KEGG" id="bms:BR0082"/>
<dbReference type="KEGG" id="bsi:BS1330_I0082"/>
<dbReference type="PATRIC" id="fig|204722.21.peg.3175"/>
<dbReference type="HOGENOM" id="CLU_081974_3_2_5"/>
<dbReference type="Proteomes" id="UP000007104">
    <property type="component" value="Chromosome I"/>
</dbReference>
<dbReference type="GO" id="GO:0008124">
    <property type="term" value="F:4-alpha-hydroxytetrahydrobiopterin dehydratase activity"/>
    <property type="evidence" value="ECO:0007669"/>
    <property type="project" value="UniProtKB-UniRule"/>
</dbReference>
<dbReference type="GO" id="GO:0006729">
    <property type="term" value="P:tetrahydrobiopterin biosynthetic process"/>
    <property type="evidence" value="ECO:0007669"/>
    <property type="project" value="InterPro"/>
</dbReference>
<dbReference type="CDD" id="cd00914">
    <property type="entry name" value="PCD_DCoH_subfamily_b"/>
    <property type="match status" value="1"/>
</dbReference>
<dbReference type="Gene3D" id="3.30.1360.20">
    <property type="entry name" value="Transcriptional coactivator/pterin dehydratase"/>
    <property type="match status" value="1"/>
</dbReference>
<dbReference type="HAMAP" id="MF_00434">
    <property type="entry name" value="Pterin_4_alpha"/>
    <property type="match status" value="1"/>
</dbReference>
<dbReference type="InterPro" id="IPR036428">
    <property type="entry name" value="PCD_sf"/>
</dbReference>
<dbReference type="InterPro" id="IPR001533">
    <property type="entry name" value="Pterin_deHydtase"/>
</dbReference>
<dbReference type="NCBIfam" id="NF002017">
    <property type="entry name" value="PRK00823.1-2"/>
    <property type="match status" value="1"/>
</dbReference>
<dbReference type="NCBIfam" id="NF002018">
    <property type="entry name" value="PRK00823.1-3"/>
    <property type="match status" value="1"/>
</dbReference>
<dbReference type="PANTHER" id="PTHR12599">
    <property type="entry name" value="PTERIN-4-ALPHA-CARBINOLAMINE DEHYDRATASE"/>
    <property type="match status" value="1"/>
</dbReference>
<dbReference type="PANTHER" id="PTHR12599:SF0">
    <property type="entry name" value="PTERIN-4-ALPHA-CARBINOLAMINE DEHYDRATASE"/>
    <property type="match status" value="1"/>
</dbReference>
<dbReference type="Pfam" id="PF01329">
    <property type="entry name" value="Pterin_4a"/>
    <property type="match status" value="1"/>
</dbReference>
<dbReference type="SUPFAM" id="SSF55248">
    <property type="entry name" value="PCD-like"/>
    <property type="match status" value="1"/>
</dbReference>